<gene>
    <name type="ordered locus">Synpcc7942_1593</name>
</gene>
<reference key="1">
    <citation type="submission" date="1997-10" db="EMBL/GenBank/DDBJ databases">
        <title>Genes encoding the alpha subunit of carboxyltransferase of the acetyl-CoA carboxylase complex and GTP cyclohydrolase I from cyanobacterium Synechococcus sp. PCC 7942.</title>
        <authorList>
            <person name="Phung L.T."/>
            <person name="Haselkorn R."/>
        </authorList>
    </citation>
    <scope>NUCLEOTIDE SEQUENCE [GENOMIC DNA]</scope>
    <source>
        <strain>ATCC 33912 / PCC 7942 / FACHB-805</strain>
    </source>
</reference>
<reference key="2">
    <citation type="submission" date="2005-08" db="EMBL/GenBank/DDBJ databases">
        <title>Complete sequence of chromosome 1 of Synechococcus elongatus PCC 7942.</title>
        <authorList>
            <consortium name="US DOE Joint Genome Institute"/>
            <person name="Copeland A."/>
            <person name="Lucas S."/>
            <person name="Lapidus A."/>
            <person name="Barry K."/>
            <person name="Detter J.C."/>
            <person name="Glavina T."/>
            <person name="Hammon N."/>
            <person name="Israni S."/>
            <person name="Pitluck S."/>
            <person name="Schmutz J."/>
            <person name="Larimer F."/>
            <person name="Land M."/>
            <person name="Kyrpides N."/>
            <person name="Lykidis A."/>
            <person name="Golden S."/>
            <person name="Richardson P."/>
        </authorList>
    </citation>
    <scope>NUCLEOTIDE SEQUENCE [LARGE SCALE GENOMIC DNA]</scope>
    <source>
        <strain>ATCC 33912 / PCC 7942 / FACHB-805</strain>
    </source>
</reference>
<reference key="3">
    <citation type="journal article" date="2010" name="Science">
        <title>Microbial biosynthesis of alkanes.</title>
        <authorList>
            <person name="Schirmer A."/>
            <person name="Rude M.A."/>
            <person name="Li X."/>
            <person name="Popova E."/>
            <person name="del Cardayre S.B."/>
        </authorList>
    </citation>
    <scope>FUNCTION</scope>
</reference>
<accession>Q54764</accession>
<comment type="function">
    <text evidence="1 2">Catalyzes the decarbonylation of fatty aldehydes to alkanes. Requires the presence of ferredoxin, ferredoxin reductase and NADPH for in vitro decarbonylase activity (By similarity). Involved in the biosynthesis of alkanes, mainly heptadecane and pentadecane.</text>
</comment>
<comment type="catalytic activity">
    <reaction evidence="1">
        <text>a long-chain fatty aldehyde + 2 NADPH + O2 + H(+) = a long-chain alkane + formate + 2 NADP(+) + H2O</text>
        <dbReference type="Rhea" id="RHEA:21440"/>
        <dbReference type="ChEBI" id="CHEBI:15377"/>
        <dbReference type="ChEBI" id="CHEBI:15378"/>
        <dbReference type="ChEBI" id="CHEBI:15379"/>
        <dbReference type="ChEBI" id="CHEBI:15740"/>
        <dbReference type="ChEBI" id="CHEBI:17176"/>
        <dbReference type="ChEBI" id="CHEBI:57783"/>
        <dbReference type="ChEBI" id="CHEBI:58349"/>
        <dbReference type="ChEBI" id="CHEBI:83563"/>
        <dbReference type="EC" id="4.1.99.5"/>
    </reaction>
</comment>
<comment type="cofactor">
    <text evidence="1">Binds 2 metal cations per subunit. The catalytic dinuclear metal-binding site could be either a di-iron or a manganese-iron cofactor.</text>
</comment>
<comment type="similarity">
    <text evidence="1">Belongs to the aldehyde decarbonylase family.</text>
</comment>
<sequence>MPQLEASLELDFQSESYKDAYSRINAIVIEGEQEAFDNYNRLAEMLPDQRDELHKLAKMEQRHMKGFMACGKNLSVTPDMGFAQKFFERLHENFKAAAAEGKVVTCLLIQSLIIECFAIAAYNIYIPVADAFARKITEGVVRDEYLHRNFGEEWLKANFDASKAELEEANRQNLPLVWLMLNEVADDARELGMERESLVEDFMIAYGEALENIGFTTREIMRMSAYGLAAV</sequence>
<evidence type="ECO:0000255" key="1">
    <source>
        <dbReference type="HAMAP-Rule" id="MF_00931"/>
    </source>
</evidence>
<evidence type="ECO:0000269" key="2">
    <source>
    </source>
</evidence>
<evidence type="ECO:0007829" key="3">
    <source>
        <dbReference type="PDB" id="4QUW"/>
    </source>
</evidence>
<evidence type="ECO:0007829" key="4">
    <source>
        <dbReference type="PDB" id="4RC8"/>
    </source>
</evidence>
<keyword id="KW-0002">3D-structure</keyword>
<keyword id="KW-0408">Iron</keyword>
<keyword id="KW-0456">Lyase</keyword>
<keyword id="KW-0479">Metal-binding</keyword>
<keyword id="KW-0521">NADP</keyword>
<keyword id="KW-1185">Reference proteome</keyword>
<dbReference type="EC" id="4.1.99.5" evidence="1"/>
<dbReference type="EMBL" id="U59236">
    <property type="protein sequence ID" value="AAB82038.1"/>
    <property type="molecule type" value="Genomic_DNA"/>
</dbReference>
<dbReference type="EMBL" id="CP000100">
    <property type="protein sequence ID" value="ABB57623.1"/>
    <property type="molecule type" value="Genomic_DNA"/>
</dbReference>
<dbReference type="RefSeq" id="WP_011378104.1">
    <property type="nucleotide sequence ID" value="NZ_JACJTX010000004.1"/>
</dbReference>
<dbReference type="PDB" id="4QUW">
    <property type="method" value="X-ray"/>
    <property type="resolution" value="2.26 A"/>
    <property type="chains" value="A=1-231"/>
</dbReference>
<dbReference type="PDB" id="4RC5">
    <property type="method" value="X-ray"/>
    <property type="resolution" value="2.30 A"/>
    <property type="chains" value="A=11-231, B=10-231"/>
</dbReference>
<dbReference type="PDB" id="4RC6">
    <property type="method" value="X-ray"/>
    <property type="resolution" value="2.90 A"/>
    <property type="chains" value="A=13-227, B=16-227"/>
</dbReference>
<dbReference type="PDB" id="4RC7">
    <property type="method" value="X-ray"/>
    <property type="resolution" value="2.20 A"/>
    <property type="chains" value="A=11-230, B=10-231"/>
</dbReference>
<dbReference type="PDB" id="4RC8">
    <property type="method" value="X-ray"/>
    <property type="resolution" value="1.71 A"/>
    <property type="chains" value="A/B=10-231"/>
</dbReference>
<dbReference type="PDBsum" id="4QUW"/>
<dbReference type="PDBsum" id="4RC5"/>
<dbReference type="PDBsum" id="4RC6"/>
<dbReference type="PDBsum" id="4RC7"/>
<dbReference type="PDBsum" id="4RC8"/>
<dbReference type="SMR" id="Q54764"/>
<dbReference type="STRING" id="1140.Synpcc7942_1593"/>
<dbReference type="PaxDb" id="1140-Synpcc7942_1593"/>
<dbReference type="KEGG" id="syf:Synpcc7942_1593"/>
<dbReference type="eggNOG" id="COG1633">
    <property type="taxonomic scope" value="Bacteria"/>
</dbReference>
<dbReference type="HOGENOM" id="CLU_1106729_0_0_3"/>
<dbReference type="OrthoDB" id="482319at2"/>
<dbReference type="BioCyc" id="MetaCyc:SYNPCC7942_1593-MONOMER"/>
<dbReference type="BioCyc" id="SYNEL:SYNPCC7942_1593-MONOMER"/>
<dbReference type="BRENDA" id="4.1.99.5">
    <property type="organism ID" value="7781"/>
</dbReference>
<dbReference type="EvolutionaryTrace" id="Q54764"/>
<dbReference type="Proteomes" id="UP000889800">
    <property type="component" value="Chromosome"/>
</dbReference>
<dbReference type="GO" id="GO:0071771">
    <property type="term" value="F:aldehyde oxygenase (deformylating) activity"/>
    <property type="evidence" value="ECO:0000315"/>
    <property type="project" value="CACAO"/>
</dbReference>
<dbReference type="GO" id="GO:0046914">
    <property type="term" value="F:transition metal ion binding"/>
    <property type="evidence" value="ECO:0007669"/>
    <property type="project" value="UniProtKB-UniRule"/>
</dbReference>
<dbReference type="CDD" id="cd00657">
    <property type="entry name" value="Ferritin_like"/>
    <property type="match status" value="1"/>
</dbReference>
<dbReference type="Gene3D" id="1.20.1260.10">
    <property type="match status" value="1"/>
</dbReference>
<dbReference type="HAMAP" id="MF_00931">
    <property type="entry name" value="Aldeh_decarbonylase"/>
    <property type="match status" value="1"/>
</dbReference>
<dbReference type="InterPro" id="IPR022612">
    <property type="entry name" value="Ald_deCOase"/>
</dbReference>
<dbReference type="InterPro" id="IPR012347">
    <property type="entry name" value="Ferritin-like"/>
</dbReference>
<dbReference type="InterPro" id="IPR009078">
    <property type="entry name" value="Ferritin-like_SF"/>
</dbReference>
<dbReference type="NCBIfam" id="TIGR04059">
    <property type="entry name" value="Ald_deCOase"/>
    <property type="match status" value="1"/>
</dbReference>
<dbReference type="Pfam" id="PF11266">
    <property type="entry name" value="Ald_deCOase"/>
    <property type="match status" value="1"/>
</dbReference>
<dbReference type="SUPFAM" id="SSF47240">
    <property type="entry name" value="Ferritin-like"/>
    <property type="match status" value="1"/>
</dbReference>
<feature type="chain" id="PRO_0000418902" description="Aldehyde decarbonylase">
    <location>
        <begin position="1"/>
        <end position="231"/>
    </location>
</feature>
<feature type="binding site" evidence="1">
    <location>
        <position position="32"/>
    </location>
    <ligand>
        <name>Fe cation</name>
        <dbReference type="ChEBI" id="CHEBI:24875"/>
        <label>1</label>
    </ligand>
</feature>
<feature type="binding site" evidence="1">
    <location>
        <position position="60"/>
    </location>
    <ligand>
        <name>Fe cation</name>
        <dbReference type="ChEBI" id="CHEBI:24875"/>
        <label>1</label>
    </ligand>
</feature>
<feature type="binding site" evidence="1">
    <location>
        <position position="60"/>
    </location>
    <ligand>
        <name>Fe cation</name>
        <dbReference type="ChEBI" id="CHEBI:24875"/>
        <label>2</label>
    </ligand>
</feature>
<feature type="binding site" evidence="1">
    <location>
        <position position="63"/>
    </location>
    <ligand>
        <name>Fe cation</name>
        <dbReference type="ChEBI" id="CHEBI:24875"/>
        <label>1</label>
    </ligand>
</feature>
<feature type="binding site" evidence="1">
    <location>
        <position position="115"/>
    </location>
    <ligand>
        <name>Fe cation</name>
        <dbReference type="ChEBI" id="CHEBI:24875"/>
        <label>2</label>
    </ligand>
</feature>
<feature type="binding site" evidence="1">
    <location>
        <position position="147"/>
    </location>
    <ligand>
        <name>Fe cation</name>
        <dbReference type="ChEBI" id="CHEBI:24875"/>
        <label>2</label>
    </ligand>
</feature>
<feature type="strand" evidence="3">
    <location>
        <begin position="12"/>
        <end position="14"/>
    </location>
</feature>
<feature type="helix" evidence="4">
    <location>
        <begin position="15"/>
        <end position="45"/>
    </location>
</feature>
<feature type="helix" evidence="4">
    <location>
        <begin position="47"/>
        <end position="49"/>
    </location>
</feature>
<feature type="helix" evidence="4">
    <location>
        <begin position="50"/>
        <end position="73"/>
    </location>
</feature>
<feature type="helix" evidence="4">
    <location>
        <begin position="80"/>
        <end position="99"/>
    </location>
</feature>
<feature type="helix" evidence="4">
    <location>
        <begin position="103"/>
        <end position="111"/>
    </location>
</feature>
<feature type="helix" evidence="4">
    <location>
        <begin position="113"/>
        <end position="125"/>
    </location>
</feature>
<feature type="helix" evidence="4">
    <location>
        <begin position="126"/>
        <end position="128"/>
    </location>
</feature>
<feature type="helix" evidence="4">
    <location>
        <begin position="131"/>
        <end position="157"/>
    </location>
</feature>
<feature type="helix" evidence="4">
    <location>
        <begin position="159"/>
        <end position="190"/>
    </location>
</feature>
<feature type="helix" evidence="4">
    <location>
        <begin position="195"/>
        <end position="213"/>
    </location>
</feature>
<feature type="helix" evidence="4">
    <location>
        <begin position="217"/>
        <end position="228"/>
    </location>
</feature>
<organism>
    <name type="scientific">Synechococcus elongatus (strain ATCC 33912 / PCC 7942 / FACHB-805)</name>
    <name type="common">Anacystis nidulans R2</name>
    <dbReference type="NCBI Taxonomy" id="1140"/>
    <lineage>
        <taxon>Bacteria</taxon>
        <taxon>Bacillati</taxon>
        <taxon>Cyanobacteriota</taxon>
        <taxon>Cyanophyceae</taxon>
        <taxon>Synechococcales</taxon>
        <taxon>Synechococcaceae</taxon>
        <taxon>Synechococcus</taxon>
    </lineage>
</organism>
<proteinExistence type="evidence at protein level"/>
<protein>
    <recommendedName>
        <fullName evidence="1">Aldehyde decarbonylase</fullName>
        <shortName evidence="1">AD</shortName>
        <ecNumber evidence="1">4.1.99.5</ecNumber>
    </recommendedName>
    <alternativeName>
        <fullName evidence="1">Fatty aldehyde decarbonylase</fullName>
    </alternativeName>
</protein>
<name>ALDEC_SYNE7</name>